<protein>
    <recommendedName>
        <fullName evidence="1">Histidine--tRNA ligase</fullName>
        <ecNumber evidence="1">6.1.1.21</ecNumber>
    </recommendedName>
    <alternativeName>
        <fullName evidence="1">Histidyl-tRNA synthetase</fullName>
        <shortName evidence="1">HisRS</shortName>
    </alternativeName>
</protein>
<accession>Q8EC33</accession>
<name>SYH_SHEON</name>
<dbReference type="EC" id="6.1.1.21" evidence="1"/>
<dbReference type="EMBL" id="AE014299">
    <property type="protein sequence ID" value="AAN56309.1"/>
    <property type="molecule type" value="Genomic_DNA"/>
</dbReference>
<dbReference type="RefSeq" id="NP_718865.1">
    <property type="nucleotide sequence ID" value="NC_004347.2"/>
</dbReference>
<dbReference type="RefSeq" id="WP_011073187.1">
    <property type="nucleotide sequence ID" value="NC_004347.2"/>
</dbReference>
<dbReference type="SMR" id="Q8EC33"/>
<dbReference type="STRING" id="211586.SO_3311"/>
<dbReference type="PaxDb" id="211586-SO_3311"/>
<dbReference type="KEGG" id="son:SO_3311"/>
<dbReference type="PATRIC" id="fig|211586.12.peg.3212"/>
<dbReference type="eggNOG" id="COG0124">
    <property type="taxonomic scope" value="Bacteria"/>
</dbReference>
<dbReference type="HOGENOM" id="CLU_025113_1_1_6"/>
<dbReference type="OrthoDB" id="9800814at2"/>
<dbReference type="PhylomeDB" id="Q8EC33"/>
<dbReference type="BioCyc" id="SONE211586:G1GMP-3083-MONOMER"/>
<dbReference type="Proteomes" id="UP000008186">
    <property type="component" value="Chromosome"/>
</dbReference>
<dbReference type="GO" id="GO:0005737">
    <property type="term" value="C:cytoplasm"/>
    <property type="evidence" value="ECO:0007669"/>
    <property type="project" value="UniProtKB-SubCell"/>
</dbReference>
<dbReference type="GO" id="GO:0005524">
    <property type="term" value="F:ATP binding"/>
    <property type="evidence" value="ECO:0007669"/>
    <property type="project" value="UniProtKB-UniRule"/>
</dbReference>
<dbReference type="GO" id="GO:0004821">
    <property type="term" value="F:histidine-tRNA ligase activity"/>
    <property type="evidence" value="ECO:0000318"/>
    <property type="project" value="GO_Central"/>
</dbReference>
<dbReference type="GO" id="GO:0006427">
    <property type="term" value="P:histidyl-tRNA aminoacylation"/>
    <property type="evidence" value="ECO:0000318"/>
    <property type="project" value="GO_Central"/>
</dbReference>
<dbReference type="CDD" id="cd00773">
    <property type="entry name" value="HisRS-like_core"/>
    <property type="match status" value="1"/>
</dbReference>
<dbReference type="CDD" id="cd00859">
    <property type="entry name" value="HisRS_anticodon"/>
    <property type="match status" value="1"/>
</dbReference>
<dbReference type="FunFam" id="3.30.930.10:FF:000005">
    <property type="entry name" value="Histidine--tRNA ligase"/>
    <property type="match status" value="1"/>
</dbReference>
<dbReference type="Gene3D" id="3.40.50.800">
    <property type="entry name" value="Anticodon-binding domain"/>
    <property type="match status" value="1"/>
</dbReference>
<dbReference type="Gene3D" id="3.30.930.10">
    <property type="entry name" value="Bira Bifunctional Protein, Domain 2"/>
    <property type="match status" value="1"/>
</dbReference>
<dbReference type="HAMAP" id="MF_00127">
    <property type="entry name" value="His_tRNA_synth"/>
    <property type="match status" value="1"/>
</dbReference>
<dbReference type="InterPro" id="IPR006195">
    <property type="entry name" value="aa-tRNA-synth_II"/>
</dbReference>
<dbReference type="InterPro" id="IPR045864">
    <property type="entry name" value="aa-tRNA-synth_II/BPL/LPL"/>
</dbReference>
<dbReference type="InterPro" id="IPR004154">
    <property type="entry name" value="Anticodon-bd"/>
</dbReference>
<dbReference type="InterPro" id="IPR036621">
    <property type="entry name" value="Anticodon-bd_dom_sf"/>
</dbReference>
<dbReference type="InterPro" id="IPR015807">
    <property type="entry name" value="His-tRNA-ligase"/>
</dbReference>
<dbReference type="InterPro" id="IPR041715">
    <property type="entry name" value="HisRS-like_core"/>
</dbReference>
<dbReference type="InterPro" id="IPR004516">
    <property type="entry name" value="HisRS/HisZ"/>
</dbReference>
<dbReference type="InterPro" id="IPR033656">
    <property type="entry name" value="HisRS_anticodon"/>
</dbReference>
<dbReference type="NCBIfam" id="TIGR00442">
    <property type="entry name" value="hisS"/>
    <property type="match status" value="1"/>
</dbReference>
<dbReference type="PANTHER" id="PTHR43707:SF1">
    <property type="entry name" value="HISTIDINE--TRNA LIGASE, MITOCHONDRIAL-RELATED"/>
    <property type="match status" value="1"/>
</dbReference>
<dbReference type="PANTHER" id="PTHR43707">
    <property type="entry name" value="HISTIDYL-TRNA SYNTHETASE"/>
    <property type="match status" value="1"/>
</dbReference>
<dbReference type="Pfam" id="PF03129">
    <property type="entry name" value="HGTP_anticodon"/>
    <property type="match status" value="1"/>
</dbReference>
<dbReference type="Pfam" id="PF13393">
    <property type="entry name" value="tRNA-synt_His"/>
    <property type="match status" value="1"/>
</dbReference>
<dbReference type="PIRSF" id="PIRSF001549">
    <property type="entry name" value="His-tRNA_synth"/>
    <property type="match status" value="1"/>
</dbReference>
<dbReference type="SUPFAM" id="SSF52954">
    <property type="entry name" value="Class II aaRS ABD-related"/>
    <property type="match status" value="1"/>
</dbReference>
<dbReference type="SUPFAM" id="SSF55681">
    <property type="entry name" value="Class II aaRS and biotin synthetases"/>
    <property type="match status" value="1"/>
</dbReference>
<dbReference type="PROSITE" id="PS50862">
    <property type="entry name" value="AA_TRNA_LIGASE_II"/>
    <property type="match status" value="1"/>
</dbReference>
<feature type="chain" id="PRO_0000136246" description="Histidine--tRNA ligase">
    <location>
        <begin position="1"/>
        <end position="425"/>
    </location>
</feature>
<reference key="1">
    <citation type="journal article" date="2002" name="Nat. Biotechnol.">
        <title>Genome sequence of the dissimilatory metal ion-reducing bacterium Shewanella oneidensis.</title>
        <authorList>
            <person name="Heidelberg J.F."/>
            <person name="Paulsen I.T."/>
            <person name="Nelson K.E."/>
            <person name="Gaidos E.J."/>
            <person name="Nelson W.C."/>
            <person name="Read T.D."/>
            <person name="Eisen J.A."/>
            <person name="Seshadri R."/>
            <person name="Ward N.L."/>
            <person name="Methe B.A."/>
            <person name="Clayton R.A."/>
            <person name="Meyer T."/>
            <person name="Tsapin A."/>
            <person name="Scott J."/>
            <person name="Beanan M.J."/>
            <person name="Brinkac L.M."/>
            <person name="Daugherty S.C."/>
            <person name="DeBoy R.T."/>
            <person name="Dodson R.J."/>
            <person name="Durkin A.S."/>
            <person name="Haft D.H."/>
            <person name="Kolonay J.F."/>
            <person name="Madupu R."/>
            <person name="Peterson J.D."/>
            <person name="Umayam L.A."/>
            <person name="White O."/>
            <person name="Wolf A.M."/>
            <person name="Vamathevan J.J."/>
            <person name="Weidman J.F."/>
            <person name="Impraim M."/>
            <person name="Lee K."/>
            <person name="Berry K.J."/>
            <person name="Lee C."/>
            <person name="Mueller J."/>
            <person name="Khouri H.M."/>
            <person name="Gill J."/>
            <person name="Utterback T.R."/>
            <person name="McDonald L.A."/>
            <person name="Feldblyum T.V."/>
            <person name="Smith H.O."/>
            <person name="Venter J.C."/>
            <person name="Nealson K.H."/>
            <person name="Fraser C.M."/>
        </authorList>
    </citation>
    <scope>NUCLEOTIDE SEQUENCE [LARGE SCALE GENOMIC DNA]</scope>
    <source>
        <strain>ATCC 700550 / JCM 31522 / CIP 106686 / LMG 19005 / NCIMB 14063 / MR-1</strain>
    </source>
</reference>
<gene>
    <name evidence="1" type="primary">hisS</name>
    <name type="ordered locus">SO_3311</name>
</gene>
<comment type="catalytic activity">
    <reaction evidence="1">
        <text>tRNA(His) + L-histidine + ATP = L-histidyl-tRNA(His) + AMP + diphosphate + H(+)</text>
        <dbReference type="Rhea" id="RHEA:17313"/>
        <dbReference type="Rhea" id="RHEA-COMP:9665"/>
        <dbReference type="Rhea" id="RHEA-COMP:9689"/>
        <dbReference type="ChEBI" id="CHEBI:15378"/>
        <dbReference type="ChEBI" id="CHEBI:30616"/>
        <dbReference type="ChEBI" id="CHEBI:33019"/>
        <dbReference type="ChEBI" id="CHEBI:57595"/>
        <dbReference type="ChEBI" id="CHEBI:78442"/>
        <dbReference type="ChEBI" id="CHEBI:78527"/>
        <dbReference type="ChEBI" id="CHEBI:456215"/>
        <dbReference type="EC" id="6.1.1.21"/>
    </reaction>
</comment>
<comment type="subunit">
    <text evidence="1">Homodimer.</text>
</comment>
<comment type="subcellular location">
    <subcellularLocation>
        <location evidence="1">Cytoplasm</location>
    </subcellularLocation>
</comment>
<comment type="similarity">
    <text evidence="1">Belongs to the class-II aminoacyl-tRNA synthetase family.</text>
</comment>
<keyword id="KW-0030">Aminoacyl-tRNA synthetase</keyword>
<keyword id="KW-0067">ATP-binding</keyword>
<keyword id="KW-0963">Cytoplasm</keyword>
<keyword id="KW-0436">Ligase</keyword>
<keyword id="KW-0547">Nucleotide-binding</keyword>
<keyword id="KW-0648">Protein biosynthesis</keyword>
<keyword id="KW-1185">Reference proteome</keyword>
<sequence length="425" mass="47524">MAKQIQAIRGMNDILPTQSPLWQKVEAVLRSSVAAYGYSEIRTPIVENTDLFKRSIGEVTDIVEKEMYTFEDRNGDSLTLRPEGTASTVRAGNEHGLLYNQEQRLWYMGPMFRHERPQKGRYRQFHQFGVEIYGIGSADIDAEVLMLSARLWEKLGITEHVTLELNTLGDPAERAAYREALIAFLEQHKDKLDEDSQRRMYSNPLRVLDSKDPQVQSILADAPALMDYLGEESSQHFAQLRELLDAVGIQYRVNSRLVRGLDYYNRTVFEWVTNSLGSQGTVLAGGRYDGLVAQLGGKETPAVGFAMGLERIVLLLETLALTQDIPAEVDVYVAAMGDNCLVEAIKVAQELRSALPTLRVMSHCGGGNLKKQMKRADKSGAQVALLIGEEELAEGVVTVKYLRNDNEQQRVARNALSAFLAELTK</sequence>
<proteinExistence type="inferred from homology"/>
<organism>
    <name type="scientific">Shewanella oneidensis (strain ATCC 700550 / JCM 31522 / CIP 106686 / LMG 19005 / NCIMB 14063 / MR-1)</name>
    <dbReference type="NCBI Taxonomy" id="211586"/>
    <lineage>
        <taxon>Bacteria</taxon>
        <taxon>Pseudomonadati</taxon>
        <taxon>Pseudomonadota</taxon>
        <taxon>Gammaproteobacteria</taxon>
        <taxon>Alteromonadales</taxon>
        <taxon>Shewanellaceae</taxon>
        <taxon>Shewanella</taxon>
    </lineage>
</organism>
<evidence type="ECO:0000255" key="1">
    <source>
        <dbReference type="HAMAP-Rule" id="MF_00127"/>
    </source>
</evidence>